<keyword id="KW-0238">DNA-binding</keyword>
<keyword id="KW-0539">Nucleus</keyword>
<keyword id="KW-1185">Reference proteome</keyword>
<keyword id="KW-0804">Transcription</keyword>
<keyword id="KW-0805">Transcription regulation</keyword>
<sequence>MDSPDSVRVKCESKGSCSPEEGLNNGLPEEHNQASGGRRRKRPVQRGKPPYSYIALIAMAIANSPERKLTLGGIYKFIMERFPFYRENSKKWQNSIRHNLTLNDCFVKIPREPGHPGKGNYWTLDPAAEDMFDNGSFLRRRKRFKRTDITTYPGYMQNSSAFTPTPTGRASYPNSIYSSVGSGYNPQIHQTHHPAVVHQYYQSPGEAGQGQHRMFSIDSLINQQSLMQPSPGAELTHHSLGLNGNLGNMTNSCSVGDLSCFQTQSISPTGVGSLLNRSSNAVSSNLTYSYSSSPPHLPVPPASYSPNNSQLYGSTSRLAMRSGPCVDHTDQLLSLPGTQINGVCQYNNSSYMRQTHFASGLERYM</sequence>
<organism>
    <name type="scientific">Xenopus laevis</name>
    <name type="common">African clawed frog</name>
    <dbReference type="NCBI Taxonomy" id="8355"/>
    <lineage>
        <taxon>Eukaryota</taxon>
        <taxon>Metazoa</taxon>
        <taxon>Chordata</taxon>
        <taxon>Craniata</taxon>
        <taxon>Vertebrata</taxon>
        <taxon>Euteleostomi</taxon>
        <taxon>Amphibia</taxon>
        <taxon>Batrachia</taxon>
        <taxon>Anura</taxon>
        <taxon>Pipoidea</taxon>
        <taxon>Pipidae</taxon>
        <taxon>Xenopodinae</taxon>
        <taxon>Xenopus</taxon>
        <taxon>Xenopus</taxon>
    </lineage>
</organism>
<proteinExistence type="evidence at transcript level"/>
<accession>Q9PTK2</accession>
<feature type="chain" id="PRO_0000258000" description="Forkhead box protein E4">
    <location>
        <begin position="1"/>
        <end position="365"/>
    </location>
</feature>
<feature type="DNA-binding region" description="Fork-head" evidence="2">
    <location>
        <begin position="48"/>
        <end position="142"/>
    </location>
</feature>
<feature type="region of interest" description="Disordered" evidence="3">
    <location>
        <begin position="1"/>
        <end position="46"/>
    </location>
</feature>
<feature type="compositionally biased region" description="Basic and acidic residues" evidence="3">
    <location>
        <begin position="1"/>
        <end position="13"/>
    </location>
</feature>
<comment type="function">
    <text evidence="4 5">Probable transcription factor. Mediates lens formation in the embryo by promoting the proliferation of the specified lens ectoderm and suppressing its terminal differentiation.</text>
</comment>
<comment type="subcellular location">
    <subcellularLocation>
        <location evidence="1 7">Nucleus</location>
    </subcellularLocation>
</comment>
<comment type="tissue specificity">
    <text evidence="4">First expressed at the end of gastrulation (stage 13) in the anterior ectodermal placode. During intermediate neural plate stages (stages 14-16), expression expands to the presumptive nasal ectoderm (PNE) and the presumptive lens ectoderm (PLE). By stages 18-21, expression begins to deplete in the PNE, while intensifying in the PLE so that by late neural stages (stages 22), expression is restricted to the PLE. Throughout tailbud stages (stage 23-31), expression is maintained in the lens placode and lens vesicle. In the maturing lens (stage 32-onwards), expression is restricted to the anterior lens epithelium, where it remains during the tadpole stage. In tadpoles there is additional expression in the ventral midline of the pharynx. Expression continues in the adult eye.</text>
</comment>
<comment type="induction">
    <text evidence="4">By pax6.</text>
</comment>
<dbReference type="EMBL" id="AF186464">
    <property type="protein sequence ID" value="AAF20385.1"/>
    <property type="molecule type" value="mRNA"/>
</dbReference>
<dbReference type="RefSeq" id="NP_001079202.1">
    <property type="nucleotide sequence ID" value="NM_001085733.2"/>
</dbReference>
<dbReference type="SMR" id="Q9PTK2"/>
<dbReference type="GeneID" id="373809"/>
<dbReference type="KEGG" id="xla:373809"/>
<dbReference type="AGR" id="Xenbase:XB-GENE-865391"/>
<dbReference type="CTD" id="373809"/>
<dbReference type="Xenbase" id="XB-GENE-865391">
    <property type="gene designation" value="foxe3.L"/>
</dbReference>
<dbReference type="OrthoDB" id="5402974at2759"/>
<dbReference type="Proteomes" id="UP000186698">
    <property type="component" value="Chromosome 4L"/>
</dbReference>
<dbReference type="Bgee" id="373809">
    <property type="expression patterns" value="Expressed in camera-type eye and 1 other cell type or tissue"/>
</dbReference>
<dbReference type="GO" id="GO:0005634">
    <property type="term" value="C:nucleus"/>
    <property type="evidence" value="ECO:0000303"/>
    <property type="project" value="UniProtKB"/>
</dbReference>
<dbReference type="GO" id="GO:0003677">
    <property type="term" value="F:DNA binding"/>
    <property type="evidence" value="ECO:0000303"/>
    <property type="project" value="UniProtKB"/>
</dbReference>
<dbReference type="GO" id="GO:0003700">
    <property type="term" value="F:DNA-binding transcription factor activity"/>
    <property type="evidence" value="ECO:0000303"/>
    <property type="project" value="UniProtKB"/>
</dbReference>
<dbReference type="GO" id="GO:0000981">
    <property type="term" value="F:DNA-binding transcription factor activity, RNA polymerase II-specific"/>
    <property type="evidence" value="ECO:0000318"/>
    <property type="project" value="GO_Central"/>
</dbReference>
<dbReference type="GO" id="GO:0000978">
    <property type="term" value="F:RNA polymerase II cis-regulatory region sequence-specific DNA binding"/>
    <property type="evidence" value="ECO:0000318"/>
    <property type="project" value="GO_Central"/>
</dbReference>
<dbReference type="GO" id="GO:0009653">
    <property type="term" value="P:anatomical structure morphogenesis"/>
    <property type="evidence" value="ECO:0000318"/>
    <property type="project" value="GO_Central"/>
</dbReference>
<dbReference type="GO" id="GO:0030154">
    <property type="term" value="P:cell differentiation"/>
    <property type="evidence" value="ECO:0000318"/>
    <property type="project" value="GO_Central"/>
</dbReference>
<dbReference type="GO" id="GO:0002088">
    <property type="term" value="P:lens development in camera-type eye"/>
    <property type="evidence" value="ECO:0000315"/>
    <property type="project" value="UniProtKB"/>
</dbReference>
<dbReference type="GO" id="GO:0006355">
    <property type="term" value="P:regulation of DNA-templated transcription"/>
    <property type="evidence" value="ECO:0000303"/>
    <property type="project" value="UniProtKB"/>
</dbReference>
<dbReference type="GO" id="GO:0006357">
    <property type="term" value="P:regulation of transcription by RNA polymerase II"/>
    <property type="evidence" value="ECO:0000318"/>
    <property type="project" value="GO_Central"/>
</dbReference>
<dbReference type="CDD" id="cd20019">
    <property type="entry name" value="FH_FOXE"/>
    <property type="match status" value="1"/>
</dbReference>
<dbReference type="FunFam" id="1.10.10.10:FF:000201">
    <property type="entry name" value="Forkhead box E1"/>
    <property type="match status" value="1"/>
</dbReference>
<dbReference type="Gene3D" id="1.10.10.10">
    <property type="entry name" value="Winged helix-like DNA-binding domain superfamily/Winged helix DNA-binding domain"/>
    <property type="match status" value="1"/>
</dbReference>
<dbReference type="InterPro" id="IPR001766">
    <property type="entry name" value="Fork_head_dom"/>
</dbReference>
<dbReference type="InterPro" id="IPR050211">
    <property type="entry name" value="FOX_domain-containing"/>
</dbReference>
<dbReference type="InterPro" id="IPR018122">
    <property type="entry name" value="TF_fork_head_CS_1"/>
</dbReference>
<dbReference type="InterPro" id="IPR030456">
    <property type="entry name" value="TF_fork_head_CS_2"/>
</dbReference>
<dbReference type="InterPro" id="IPR036388">
    <property type="entry name" value="WH-like_DNA-bd_sf"/>
</dbReference>
<dbReference type="InterPro" id="IPR036390">
    <property type="entry name" value="WH_DNA-bd_sf"/>
</dbReference>
<dbReference type="PANTHER" id="PTHR11829">
    <property type="entry name" value="FORKHEAD BOX PROTEIN"/>
    <property type="match status" value="1"/>
</dbReference>
<dbReference type="PANTHER" id="PTHR11829:SF156">
    <property type="entry name" value="FORKHEAD BOX PROTEIN E3"/>
    <property type="match status" value="1"/>
</dbReference>
<dbReference type="Pfam" id="PF00250">
    <property type="entry name" value="Forkhead"/>
    <property type="match status" value="1"/>
</dbReference>
<dbReference type="PRINTS" id="PR00053">
    <property type="entry name" value="FORKHEAD"/>
</dbReference>
<dbReference type="SMART" id="SM00339">
    <property type="entry name" value="FH"/>
    <property type="match status" value="1"/>
</dbReference>
<dbReference type="SUPFAM" id="SSF46785">
    <property type="entry name" value="Winged helix' DNA-binding domain"/>
    <property type="match status" value="1"/>
</dbReference>
<dbReference type="PROSITE" id="PS00657">
    <property type="entry name" value="FORK_HEAD_1"/>
    <property type="match status" value="1"/>
</dbReference>
<dbReference type="PROSITE" id="PS00658">
    <property type="entry name" value="FORK_HEAD_2"/>
    <property type="match status" value="1"/>
</dbReference>
<dbReference type="PROSITE" id="PS50039">
    <property type="entry name" value="FORK_HEAD_3"/>
    <property type="match status" value="1"/>
</dbReference>
<gene>
    <name evidence="6" type="primary">foxe4</name>
    <name evidence="8" type="synonym">lens1</name>
</gene>
<reference evidence="7 8" key="1">
    <citation type="journal article" date="1999" name="Development">
        <title>A novel fork head gene mediates early steps during Xenopus lens formation.</title>
        <authorList>
            <person name="Kenyon K.L."/>
            <person name="Moody S.A."/>
            <person name="Jamrich M."/>
        </authorList>
    </citation>
    <scope>NUCLEOTIDE SEQUENCE [MRNA]</scope>
    <scope>FUNCTION</scope>
    <scope>TISSUE SPECIFICITY</scope>
    <scope>INDUCTION</scope>
    <source>
        <tissue evidence="4">Embryonic head</tissue>
    </source>
</reference>
<reference evidence="7" key="2">
    <citation type="journal article" date="2005" name="Gene">
        <title>Of fox and frogs: fox (fork head/winged helix) transcription factors in Xenopus development.</title>
        <authorList>
            <person name="Pohl B.S."/>
            <person name="Knoechel W."/>
        </authorList>
    </citation>
    <scope>REVIEW</scope>
</reference>
<name>FOXE4_XENLA</name>
<evidence type="ECO:0000255" key="1"/>
<evidence type="ECO:0000255" key="2">
    <source>
        <dbReference type="PROSITE-ProRule" id="PRU00089"/>
    </source>
</evidence>
<evidence type="ECO:0000256" key="3">
    <source>
        <dbReference type="SAM" id="MobiDB-lite"/>
    </source>
</evidence>
<evidence type="ECO:0000269" key="4">
    <source>
    </source>
</evidence>
<evidence type="ECO:0000269" key="5">
    <source>
    </source>
</evidence>
<evidence type="ECO:0000303" key="6">
    <source>
    </source>
</evidence>
<evidence type="ECO:0000305" key="7"/>
<evidence type="ECO:0000312" key="8">
    <source>
        <dbReference type="EMBL" id="AAF20385.1"/>
    </source>
</evidence>
<protein>
    <recommendedName>
        <fullName>Forkhead box protein E4</fullName>
        <shortName>FoxE4</shortName>
    </recommendedName>
    <alternativeName>
        <fullName>Xlens1</fullName>
    </alternativeName>
</protein>